<gene>
    <name evidence="1" type="primary">dut</name>
    <name type="ordered locus">Rpic_2732</name>
</gene>
<dbReference type="EC" id="3.6.1.23" evidence="1"/>
<dbReference type="EMBL" id="CP001068">
    <property type="protein sequence ID" value="ACD27857.1"/>
    <property type="molecule type" value="Genomic_DNA"/>
</dbReference>
<dbReference type="SMR" id="B2UAR0"/>
<dbReference type="STRING" id="402626.Rpic_2732"/>
<dbReference type="KEGG" id="rpi:Rpic_2732"/>
<dbReference type="eggNOG" id="COG0756">
    <property type="taxonomic scope" value="Bacteria"/>
</dbReference>
<dbReference type="HOGENOM" id="CLU_068508_1_1_4"/>
<dbReference type="UniPathway" id="UPA00610">
    <property type="reaction ID" value="UER00666"/>
</dbReference>
<dbReference type="GO" id="GO:0004170">
    <property type="term" value="F:dUTP diphosphatase activity"/>
    <property type="evidence" value="ECO:0007669"/>
    <property type="project" value="UniProtKB-UniRule"/>
</dbReference>
<dbReference type="GO" id="GO:0000287">
    <property type="term" value="F:magnesium ion binding"/>
    <property type="evidence" value="ECO:0007669"/>
    <property type="project" value="UniProtKB-UniRule"/>
</dbReference>
<dbReference type="GO" id="GO:0006226">
    <property type="term" value="P:dUMP biosynthetic process"/>
    <property type="evidence" value="ECO:0007669"/>
    <property type="project" value="UniProtKB-UniRule"/>
</dbReference>
<dbReference type="GO" id="GO:0046081">
    <property type="term" value="P:dUTP catabolic process"/>
    <property type="evidence" value="ECO:0007669"/>
    <property type="project" value="InterPro"/>
</dbReference>
<dbReference type="CDD" id="cd07557">
    <property type="entry name" value="trimeric_dUTPase"/>
    <property type="match status" value="1"/>
</dbReference>
<dbReference type="FunFam" id="2.70.40.10:FF:000002">
    <property type="entry name" value="dUTP diphosphatase"/>
    <property type="match status" value="1"/>
</dbReference>
<dbReference type="Gene3D" id="2.70.40.10">
    <property type="match status" value="1"/>
</dbReference>
<dbReference type="HAMAP" id="MF_00116">
    <property type="entry name" value="dUTPase_bact"/>
    <property type="match status" value="1"/>
</dbReference>
<dbReference type="InterPro" id="IPR008181">
    <property type="entry name" value="dUTPase"/>
</dbReference>
<dbReference type="InterPro" id="IPR029054">
    <property type="entry name" value="dUTPase-like"/>
</dbReference>
<dbReference type="InterPro" id="IPR036157">
    <property type="entry name" value="dUTPase-like_sf"/>
</dbReference>
<dbReference type="InterPro" id="IPR033704">
    <property type="entry name" value="dUTPase_trimeric"/>
</dbReference>
<dbReference type="NCBIfam" id="TIGR00576">
    <property type="entry name" value="dut"/>
    <property type="match status" value="1"/>
</dbReference>
<dbReference type="NCBIfam" id="NF001862">
    <property type="entry name" value="PRK00601.1"/>
    <property type="match status" value="1"/>
</dbReference>
<dbReference type="PANTHER" id="PTHR11241">
    <property type="entry name" value="DEOXYURIDINE 5'-TRIPHOSPHATE NUCLEOTIDOHYDROLASE"/>
    <property type="match status" value="1"/>
</dbReference>
<dbReference type="PANTHER" id="PTHR11241:SF0">
    <property type="entry name" value="DEOXYURIDINE 5'-TRIPHOSPHATE NUCLEOTIDOHYDROLASE"/>
    <property type="match status" value="1"/>
</dbReference>
<dbReference type="Pfam" id="PF00692">
    <property type="entry name" value="dUTPase"/>
    <property type="match status" value="1"/>
</dbReference>
<dbReference type="SUPFAM" id="SSF51283">
    <property type="entry name" value="dUTPase-like"/>
    <property type="match status" value="1"/>
</dbReference>
<evidence type="ECO:0000255" key="1">
    <source>
        <dbReference type="HAMAP-Rule" id="MF_00116"/>
    </source>
</evidence>
<reference key="1">
    <citation type="submission" date="2008-05" db="EMBL/GenBank/DDBJ databases">
        <title>Complete sequence of chromosome 1 of Ralstonia pickettii 12J.</title>
        <authorList>
            <person name="Lucas S."/>
            <person name="Copeland A."/>
            <person name="Lapidus A."/>
            <person name="Glavina del Rio T."/>
            <person name="Dalin E."/>
            <person name="Tice H."/>
            <person name="Bruce D."/>
            <person name="Goodwin L."/>
            <person name="Pitluck S."/>
            <person name="Meincke L."/>
            <person name="Brettin T."/>
            <person name="Detter J.C."/>
            <person name="Han C."/>
            <person name="Kuske C.R."/>
            <person name="Schmutz J."/>
            <person name="Larimer F."/>
            <person name="Land M."/>
            <person name="Hauser L."/>
            <person name="Kyrpides N."/>
            <person name="Mikhailova N."/>
            <person name="Marsh T."/>
            <person name="Richardson P."/>
        </authorList>
    </citation>
    <scope>NUCLEOTIDE SEQUENCE [LARGE SCALE GENOMIC DNA]</scope>
    <source>
        <strain>12J</strain>
    </source>
</reference>
<keyword id="KW-0378">Hydrolase</keyword>
<keyword id="KW-0460">Magnesium</keyword>
<keyword id="KW-0479">Metal-binding</keyword>
<keyword id="KW-0546">Nucleotide metabolism</keyword>
<sequence>MKLDVKILDARLHEQLPQYATTGSAGLDLRACVDAPLTIEPGTTHLIPTGMAIHLADPGYAALILPRSGMGHKHGIVLGNLVGLIDSDYQGQLMVSTWNRGSTAFVLNPMERLAQLVIVPVVQAELNIVDDFAESERGAGGFGSTGRH</sequence>
<protein>
    <recommendedName>
        <fullName evidence="1">Deoxyuridine 5'-triphosphate nucleotidohydrolase</fullName>
        <shortName evidence="1">dUTPase</shortName>
        <ecNumber evidence="1">3.6.1.23</ecNumber>
    </recommendedName>
    <alternativeName>
        <fullName evidence="1">dUTP pyrophosphatase</fullName>
    </alternativeName>
</protein>
<proteinExistence type="inferred from homology"/>
<organism>
    <name type="scientific">Ralstonia pickettii (strain 12J)</name>
    <dbReference type="NCBI Taxonomy" id="402626"/>
    <lineage>
        <taxon>Bacteria</taxon>
        <taxon>Pseudomonadati</taxon>
        <taxon>Pseudomonadota</taxon>
        <taxon>Betaproteobacteria</taxon>
        <taxon>Burkholderiales</taxon>
        <taxon>Burkholderiaceae</taxon>
        <taxon>Ralstonia</taxon>
    </lineage>
</organism>
<comment type="function">
    <text evidence="1">This enzyme is involved in nucleotide metabolism: it produces dUMP, the immediate precursor of thymidine nucleotides and it decreases the intracellular concentration of dUTP so that uracil cannot be incorporated into DNA.</text>
</comment>
<comment type="catalytic activity">
    <reaction evidence="1">
        <text>dUTP + H2O = dUMP + diphosphate + H(+)</text>
        <dbReference type="Rhea" id="RHEA:10248"/>
        <dbReference type="ChEBI" id="CHEBI:15377"/>
        <dbReference type="ChEBI" id="CHEBI:15378"/>
        <dbReference type="ChEBI" id="CHEBI:33019"/>
        <dbReference type="ChEBI" id="CHEBI:61555"/>
        <dbReference type="ChEBI" id="CHEBI:246422"/>
        <dbReference type="EC" id="3.6.1.23"/>
    </reaction>
</comment>
<comment type="cofactor">
    <cofactor evidence="1">
        <name>Mg(2+)</name>
        <dbReference type="ChEBI" id="CHEBI:18420"/>
    </cofactor>
</comment>
<comment type="pathway">
    <text evidence="1">Pyrimidine metabolism; dUMP biosynthesis; dUMP from dCTP (dUTP route): step 2/2.</text>
</comment>
<comment type="similarity">
    <text evidence="1">Belongs to the dUTPase family.</text>
</comment>
<feature type="chain" id="PRO_1000094981" description="Deoxyuridine 5'-triphosphate nucleotidohydrolase">
    <location>
        <begin position="1"/>
        <end position="148"/>
    </location>
</feature>
<feature type="binding site" evidence="1">
    <location>
        <begin position="67"/>
        <end position="69"/>
    </location>
    <ligand>
        <name>substrate</name>
    </ligand>
</feature>
<feature type="binding site" evidence="1">
    <location>
        <position position="80"/>
    </location>
    <ligand>
        <name>substrate</name>
    </ligand>
</feature>
<feature type="binding site" evidence="1">
    <location>
        <begin position="84"/>
        <end position="86"/>
    </location>
    <ligand>
        <name>substrate</name>
    </ligand>
</feature>
<feature type="binding site" evidence="1">
    <location>
        <position position="94"/>
    </location>
    <ligand>
        <name>substrate</name>
    </ligand>
</feature>
<accession>B2UAR0</accession>
<name>DUT_RALPJ</name>